<reference key="1">
    <citation type="journal article" date="1999" name="Gene">
        <title>Molecular cloning and characterization of a novel cbl-family gene, cbl-c.</title>
        <authorList>
            <person name="Kim M."/>
            <person name="Tezuka T."/>
            <person name="Suzuki Y."/>
            <person name="Sugano S."/>
            <person name="Hirai M."/>
            <person name="Yamamoto T."/>
        </authorList>
    </citation>
    <scope>NUCLEOTIDE SEQUENCE [MRNA] (ISOFORM 1)</scope>
    <scope>VARIANT TYR-405</scope>
</reference>
<reference key="2">
    <citation type="journal article" date="1999" name="Oncogene">
        <title>cbl-3: a new mammalian cbl family protein.</title>
        <authorList>
            <person name="Keane M.M."/>
            <person name="Ettenberg S.A."/>
            <person name="Nau M.M."/>
            <person name="Banerjee P."/>
            <person name="Cuello M."/>
            <person name="Penninger J."/>
            <person name="Lipkowitz S."/>
        </authorList>
    </citation>
    <scope>NUCLEOTIDE SEQUENCE [MRNA] (ISOFORMS 1 AND 2)</scope>
    <scope>VARIANT TYR-405</scope>
    <scope>FUNCTION AS EGF SIGNALING NEGATIVE REGULATOR</scope>
    <scope>PHOSPHORYLATION BY EGFR (ISOFORM 1)</scope>
    <scope>TISSUE SPECIFICITY</scope>
    <scope>INTERACTION WITH CRK AND LYN</scope>
    <source>
        <tissue>Pancreatic adenocarcinoma</tissue>
    </source>
</reference>
<reference key="3">
    <citation type="journal article" date="2004" name="Genome Res.">
        <title>The status, quality, and expansion of the NIH full-length cDNA project: the Mammalian Gene Collection (MGC).</title>
        <authorList>
            <consortium name="The MGC Project Team"/>
        </authorList>
    </citation>
    <scope>NUCLEOTIDE SEQUENCE [LARGE SCALE MRNA] (ISOFORM 1)</scope>
    <source>
        <tissue>Skin</tissue>
    </source>
</reference>
<reference key="4">
    <citation type="journal article" date="2004" name="Oncogene">
        <title>Cbl-c suppresses v-Src-induced transformation through ubiquitin-dependent protein degradation.</title>
        <authorList>
            <person name="Kim M."/>
            <person name="Tezuka T."/>
            <person name="Tanaka K."/>
            <person name="Yamamoto T."/>
        </authorList>
    </citation>
    <scope>FUNCTION AS E3 UBIQUITIN-PROTEIN LIGASE</scope>
    <scope>CATALYTIC ACTIVITY</scope>
    <scope>INTERACTION WITH SRC</scope>
    <scope>AUTOUBIQUITINATION</scope>
    <scope>MUTAGENESIS OF GLY-276; TYR-341 AND CYS-351</scope>
</reference>
<reference key="5">
    <citation type="journal article" date="2008" name="J. Neurosci.">
        <title>CD2AP and Cbl-3/Cbl-c constitute a critical checkpoint in the regulation of ret signal transduction.</title>
        <authorList>
            <person name="Tsui C.C."/>
            <person name="Pierchala B.A."/>
        </authorList>
    </citation>
    <scope>FUNCTION IN RET STABILITY</scope>
    <scope>INTERACTION WITH RET</scope>
    <scope>MUTAGENESIS OF GLY-276 AND CYS-351</scope>
</reference>
<reference key="6">
    <citation type="journal article" date="2010" name="J. Biol. Chem.">
        <title>The N terminus of Cbl-c regulates ubiquitin ligase activity by modulating affinity for the ubiquitin-conjugating enzyme.</title>
        <authorList>
            <person name="Ryan P.E."/>
            <person name="Sivadasan-Nair N."/>
            <person name="Nau M.M."/>
            <person name="Nicholas S."/>
            <person name="Lipkowitz S."/>
        </authorList>
    </citation>
    <scope>FUNCTION</scope>
    <scope>CATALYTIC ACTIVITY</scope>
    <scope>ACTIVITY REGULATION</scope>
    <scope>DOMAIN</scope>
    <scope>INTERACTION WITH UBE2D2 AND UBE2D3</scope>
    <scope>PHOSPHORYLATION AT TYR-341</scope>
    <scope>MUTAGENESIS OF TYR-341</scope>
</reference>
<reference key="7">
    <citation type="journal article" date="2012" name="PLoS ONE">
        <title>Cbl-c ubiquitin ligase activity is increased via the interaction of its RING finger domain with a LIM domain of the paxillin homolog, Hic 5.</title>
        <authorList>
            <person name="Ryan P.E."/>
            <person name="Kales S.C."/>
            <person name="Yadavalli R."/>
            <person name="Nau M.M."/>
            <person name="Zhang H."/>
            <person name="Lipkowitz S."/>
        </authorList>
    </citation>
    <scope>FUNCTION</scope>
    <scope>CATALYTIC ACTIVITY</scope>
    <scope>AUTOUBIQUITINATION</scope>
    <scope>PHOSPHORYLATION AT TYR-341</scope>
    <scope>INTERACTION WITH TGFB1I1</scope>
    <scope>MUTAGENESIS OF TYR-341; CYS-351 AND CYS-366</scope>
</reference>
<reference key="8">
    <citation type="submission" date="2010-10" db="PDB data bank">
        <title>Crystal structure of Cbl-c (Cbl-3) TKB domain in complex with EGFR py1069 peptide.</title>
        <authorList>
            <consortium name="Structural genomics consortium (SGC)"/>
        </authorList>
    </citation>
    <scope>X-RAY CRYSTALLOGRAPHY (2.52 ANGSTROMS) OF 9-323 IN COMPLEX WITH EGFR PEPTIDE</scope>
</reference>
<reference key="9">
    <citation type="journal article" date="2012" name="J. Biochem.">
        <title>Structural flexibility regulates phosphopeptide-binding activity of the tyrosine kinase binding domain of Cbl-c.</title>
        <authorList>
            <person name="Takeshita K."/>
            <person name="Tezuka T."/>
            <person name="Isozaki Y."/>
            <person name="Yamashita E."/>
            <person name="Suzuki M."/>
            <person name="Kim M."/>
            <person name="Yamanashi Y."/>
            <person name="Yamamoto T."/>
            <person name="Nakagawa A."/>
        </authorList>
    </citation>
    <scope>X-RAY CRYSTALLOGRAPHY (1.52 ANGSTROMS) OF 1-323 IN COMPLEX WITH CALCIUM; SRC AND EGFR PEPTIDES</scope>
    <scope>CALCIUM-BINDING</scope>
    <scope>INTERACTION WITH EGFR AND SRC</scope>
    <scope>MUTAGENESIS OF TYR-244; ARG-264; PRO-265; SER-266; THR-268 AND GLY-276</scope>
</reference>
<accession>Q9ULV8</accession>
<accession>Q8N1E5</accession>
<accession>Q9Y5Z2</accession>
<accession>Q9Y5Z3</accession>
<sequence length="474" mass="52456">MALAVAPWGRQWEEARALGRAVRMLQRLEEQCVDPRLSVSPPSLRDLLPRTAQLLREVAHSRRAAGGGGPGGPGGSGDFLLIYLANLEAKSRQVAALLPPRGRRSANDELFRAGSRLRRQLAKLAIIFSHMHAELHALFPGGKYCGHMYQLTKAPAHTFWRESCGARCVLPWAEFESLLGTCHPVEPGCTALALRTTIDLTCSGHVSIFEFDVFTRLFQPWPTLLKNWQLLAVNHPGYMAFLTYDEVQERLQACRDKPGSYIFRPSCTRLGQWAIGYVSSDGSILQTIPANKPLSQVLLEGQKDGFYLYPDGKTHNPDLTELGQAEPQQRIHVSEEQLQLYWAMDSTFELCKICAESNKDVKIEPCGHLLCSCCLAAWQHSDSQTCPFCRCEIKGWEAVSIYQFHGQATAEDSGNSSDQEGRELELGQVPLSAPPLPPRPDLPPRKPRNAQPKVRLLKGNSPPAALGPQDPAPA</sequence>
<evidence type="ECO:0000250" key="1"/>
<evidence type="ECO:0000250" key="2">
    <source>
        <dbReference type="UniProtKB" id="P22681"/>
    </source>
</evidence>
<evidence type="ECO:0000255" key="3">
    <source>
        <dbReference type="PROSITE-ProRule" id="PRU00175"/>
    </source>
</evidence>
<evidence type="ECO:0000255" key="4">
    <source>
        <dbReference type="PROSITE-ProRule" id="PRU00839"/>
    </source>
</evidence>
<evidence type="ECO:0000256" key="5">
    <source>
        <dbReference type="SAM" id="MobiDB-lite"/>
    </source>
</evidence>
<evidence type="ECO:0000269" key="6">
    <source>
    </source>
</evidence>
<evidence type="ECO:0000269" key="7">
    <source>
    </source>
</evidence>
<evidence type="ECO:0000269" key="8">
    <source>
    </source>
</evidence>
<evidence type="ECO:0000269" key="9">
    <source>
    </source>
</evidence>
<evidence type="ECO:0000269" key="10">
    <source>
    </source>
</evidence>
<evidence type="ECO:0000269" key="11">
    <source>
    </source>
</evidence>
<evidence type="ECO:0000269" key="12">
    <source>
    </source>
</evidence>
<evidence type="ECO:0000269" key="13">
    <source ref="8"/>
</evidence>
<evidence type="ECO:0000303" key="14">
    <source>
    </source>
</evidence>
<evidence type="ECO:0000305" key="15"/>
<evidence type="ECO:0007829" key="16">
    <source>
        <dbReference type="PDB" id="3OP0"/>
    </source>
</evidence>
<evidence type="ECO:0007829" key="17">
    <source>
        <dbReference type="PDB" id="3VRP"/>
    </source>
</evidence>
<evidence type="ECO:0007829" key="18">
    <source>
        <dbReference type="PDB" id="3VRQ"/>
    </source>
</evidence>
<gene>
    <name type="primary">CBLC</name>
    <name type="synonym">CBL3</name>
    <name type="synonym">RNF57</name>
</gene>
<organism>
    <name type="scientific">Homo sapiens</name>
    <name type="common">Human</name>
    <dbReference type="NCBI Taxonomy" id="9606"/>
    <lineage>
        <taxon>Eukaryota</taxon>
        <taxon>Metazoa</taxon>
        <taxon>Chordata</taxon>
        <taxon>Craniata</taxon>
        <taxon>Vertebrata</taxon>
        <taxon>Euteleostomi</taxon>
        <taxon>Mammalia</taxon>
        <taxon>Eutheria</taxon>
        <taxon>Euarchontoglires</taxon>
        <taxon>Primates</taxon>
        <taxon>Haplorrhini</taxon>
        <taxon>Catarrhini</taxon>
        <taxon>Hominidae</taxon>
        <taxon>Homo</taxon>
    </lineage>
</organism>
<dbReference type="EC" id="2.3.2.27" evidence="8 10 12"/>
<dbReference type="EMBL" id="AB028645">
    <property type="protein sequence ID" value="BAA86298.1"/>
    <property type="molecule type" value="mRNA"/>
</dbReference>
<dbReference type="EMBL" id="AF117646">
    <property type="protein sequence ID" value="AAD34341.1"/>
    <property type="molecule type" value="mRNA"/>
</dbReference>
<dbReference type="EMBL" id="AF117647">
    <property type="protein sequence ID" value="AAD34342.1"/>
    <property type="molecule type" value="mRNA"/>
</dbReference>
<dbReference type="EMBL" id="BC028915">
    <property type="protein sequence ID" value="AAH28915.1"/>
    <property type="molecule type" value="mRNA"/>
</dbReference>
<dbReference type="CCDS" id="CCDS12643.1">
    <molecule id="Q9ULV8-1"/>
</dbReference>
<dbReference type="CCDS" id="CCDS46109.1">
    <molecule id="Q9ULV8-2"/>
</dbReference>
<dbReference type="RefSeq" id="NP_001124324.1">
    <molecule id="Q9ULV8-2"/>
    <property type="nucleotide sequence ID" value="NM_001130852.1"/>
</dbReference>
<dbReference type="RefSeq" id="NP_036248.3">
    <molecule id="Q9ULV8-1"/>
    <property type="nucleotide sequence ID" value="NM_012116.3"/>
</dbReference>
<dbReference type="PDB" id="3OP0">
    <property type="method" value="X-ray"/>
    <property type="resolution" value="2.52 A"/>
    <property type="chains" value="A/B=9-323"/>
</dbReference>
<dbReference type="PDB" id="3VRN">
    <property type="method" value="X-ray"/>
    <property type="resolution" value="1.64 A"/>
    <property type="chains" value="A=1-323"/>
</dbReference>
<dbReference type="PDB" id="3VRO">
    <property type="method" value="X-ray"/>
    <property type="resolution" value="1.80 A"/>
    <property type="chains" value="A=1-323"/>
</dbReference>
<dbReference type="PDB" id="3VRP">
    <property type="method" value="X-ray"/>
    <property type="resolution" value="1.52 A"/>
    <property type="chains" value="A=1-323"/>
</dbReference>
<dbReference type="PDB" id="3VRQ">
    <property type="method" value="X-ray"/>
    <property type="resolution" value="2.39 A"/>
    <property type="chains" value="A/B=1-323"/>
</dbReference>
<dbReference type="PDB" id="3VRR">
    <property type="method" value="X-ray"/>
    <property type="resolution" value="2.00 A"/>
    <property type="chains" value="A=1-323"/>
</dbReference>
<dbReference type="PDBsum" id="3OP0"/>
<dbReference type="PDBsum" id="3VRN"/>
<dbReference type="PDBsum" id="3VRO"/>
<dbReference type="PDBsum" id="3VRP"/>
<dbReference type="PDBsum" id="3VRQ"/>
<dbReference type="PDBsum" id="3VRR"/>
<dbReference type="SMR" id="Q9ULV8"/>
<dbReference type="BioGRID" id="117156">
    <property type="interactions" value="73"/>
</dbReference>
<dbReference type="FunCoup" id="Q9ULV8">
    <property type="interactions" value="476"/>
</dbReference>
<dbReference type="IntAct" id="Q9ULV8">
    <property type="interactions" value="35"/>
</dbReference>
<dbReference type="MINT" id="Q9ULV8"/>
<dbReference type="STRING" id="9606.ENSP00000494162"/>
<dbReference type="BindingDB" id="Q9ULV8"/>
<dbReference type="iPTMnet" id="Q9ULV8"/>
<dbReference type="PhosphoSitePlus" id="Q9ULV8"/>
<dbReference type="BioMuta" id="CBLC"/>
<dbReference type="DMDM" id="125987803"/>
<dbReference type="jPOST" id="Q9ULV8"/>
<dbReference type="MassIVE" id="Q9ULV8"/>
<dbReference type="PaxDb" id="9606-ENSP00000270279"/>
<dbReference type="PeptideAtlas" id="Q9ULV8"/>
<dbReference type="ProteomicsDB" id="85137">
    <molecule id="Q9ULV8-1"/>
</dbReference>
<dbReference type="ProteomicsDB" id="85138">
    <molecule id="Q9ULV8-2"/>
</dbReference>
<dbReference type="Pumba" id="Q9ULV8"/>
<dbReference type="Antibodypedia" id="3762">
    <property type="antibodies" value="390 antibodies from 31 providers"/>
</dbReference>
<dbReference type="DNASU" id="23624"/>
<dbReference type="Ensembl" id="ENST00000341505.4">
    <molecule id="Q9ULV8-2"/>
    <property type="protein sequence ID" value="ENSP00000340250.4"/>
    <property type="gene ID" value="ENSG00000142273.13"/>
</dbReference>
<dbReference type="Ensembl" id="ENST00000647358.2">
    <molecule id="Q9ULV8-1"/>
    <property type="protein sequence ID" value="ENSP00000494162.1"/>
    <property type="gene ID" value="ENSG00000142273.13"/>
</dbReference>
<dbReference type="GeneID" id="23624"/>
<dbReference type="KEGG" id="hsa:23624"/>
<dbReference type="MANE-Select" id="ENST00000647358.2">
    <property type="protein sequence ID" value="ENSP00000494162.1"/>
    <property type="RefSeq nucleotide sequence ID" value="NM_012116.4"/>
    <property type="RefSeq protein sequence ID" value="NP_036248.3"/>
</dbReference>
<dbReference type="UCSC" id="uc002ozs.4">
    <molecule id="Q9ULV8-1"/>
    <property type="organism name" value="human"/>
</dbReference>
<dbReference type="AGR" id="HGNC:15961"/>
<dbReference type="CTD" id="23624"/>
<dbReference type="DisGeNET" id="23624"/>
<dbReference type="GeneCards" id="CBLC"/>
<dbReference type="HGNC" id="HGNC:15961">
    <property type="gene designation" value="CBLC"/>
</dbReference>
<dbReference type="HPA" id="ENSG00000142273">
    <property type="expression patterns" value="Tissue enhanced (esophagus, intestine, skin)"/>
</dbReference>
<dbReference type="MalaCards" id="CBLC"/>
<dbReference type="MIM" id="608453">
    <property type="type" value="gene"/>
</dbReference>
<dbReference type="neXtProt" id="NX_Q9ULV8"/>
<dbReference type="OpenTargets" id="ENSG00000142273"/>
<dbReference type="PharmGKB" id="PA26117"/>
<dbReference type="VEuPathDB" id="HostDB:ENSG00000142273"/>
<dbReference type="eggNOG" id="KOG1785">
    <property type="taxonomic scope" value="Eukaryota"/>
</dbReference>
<dbReference type="GeneTree" id="ENSGT00940000162336"/>
<dbReference type="HOGENOM" id="CLU_013535_2_0_1"/>
<dbReference type="InParanoid" id="Q9ULV8"/>
<dbReference type="OMA" id="NIRLEPC"/>
<dbReference type="OrthoDB" id="7237699at2759"/>
<dbReference type="PAN-GO" id="Q9ULV8">
    <property type="GO annotations" value="7 GO annotations based on evolutionary models"/>
</dbReference>
<dbReference type="PhylomeDB" id="Q9ULV8"/>
<dbReference type="TreeFam" id="TF314210"/>
<dbReference type="PathwayCommons" id="Q9ULV8"/>
<dbReference type="SignaLink" id="Q9ULV8"/>
<dbReference type="SIGNOR" id="Q9ULV8"/>
<dbReference type="BioGRID-ORCS" id="23624">
    <property type="hits" value="17 hits in 1188 CRISPR screens"/>
</dbReference>
<dbReference type="EvolutionaryTrace" id="Q9ULV8"/>
<dbReference type="GeneWiki" id="CBLC"/>
<dbReference type="GenomeRNAi" id="23624"/>
<dbReference type="Pharos" id="Q9ULV8">
    <property type="development level" value="Tbio"/>
</dbReference>
<dbReference type="PRO" id="PR:Q9ULV8"/>
<dbReference type="Proteomes" id="UP000005640">
    <property type="component" value="Chromosome 19"/>
</dbReference>
<dbReference type="RNAct" id="Q9ULV8">
    <property type="molecule type" value="protein"/>
</dbReference>
<dbReference type="Bgee" id="ENSG00000142273">
    <property type="expression patterns" value="Expressed in mucosa of transverse colon and 95 other cell types or tissues"/>
</dbReference>
<dbReference type="ExpressionAtlas" id="Q9ULV8">
    <property type="expression patterns" value="baseline and differential"/>
</dbReference>
<dbReference type="GO" id="GO:0045121">
    <property type="term" value="C:membrane raft"/>
    <property type="evidence" value="ECO:0000318"/>
    <property type="project" value="GO_Central"/>
</dbReference>
<dbReference type="GO" id="GO:0005886">
    <property type="term" value="C:plasma membrane"/>
    <property type="evidence" value="ECO:0000318"/>
    <property type="project" value="GO_Central"/>
</dbReference>
<dbReference type="GO" id="GO:0005509">
    <property type="term" value="F:calcium ion binding"/>
    <property type="evidence" value="ECO:0007669"/>
    <property type="project" value="InterPro"/>
</dbReference>
<dbReference type="GO" id="GO:0005154">
    <property type="term" value="F:epidermal growth factor receptor binding"/>
    <property type="evidence" value="ECO:0000314"/>
    <property type="project" value="BHF-UCL"/>
</dbReference>
<dbReference type="GO" id="GO:0001784">
    <property type="term" value="F:phosphotyrosine residue binding"/>
    <property type="evidence" value="ECO:0000314"/>
    <property type="project" value="BHF-UCL"/>
</dbReference>
<dbReference type="GO" id="GO:0030971">
    <property type="term" value="F:receptor tyrosine kinase binding"/>
    <property type="evidence" value="ECO:0000318"/>
    <property type="project" value="GO_Central"/>
</dbReference>
<dbReference type="GO" id="GO:0017124">
    <property type="term" value="F:SH3 domain binding"/>
    <property type="evidence" value="ECO:0000314"/>
    <property type="project" value="BHF-UCL"/>
</dbReference>
<dbReference type="GO" id="GO:0061630">
    <property type="term" value="F:ubiquitin protein ligase activity"/>
    <property type="evidence" value="ECO:0000314"/>
    <property type="project" value="BHF-UCL"/>
</dbReference>
<dbReference type="GO" id="GO:0008270">
    <property type="term" value="F:zinc ion binding"/>
    <property type="evidence" value="ECO:0000304"/>
    <property type="project" value="ProtInc"/>
</dbReference>
<dbReference type="GO" id="GO:0007166">
    <property type="term" value="P:cell surface receptor signaling pathway"/>
    <property type="evidence" value="ECO:0007669"/>
    <property type="project" value="InterPro"/>
</dbReference>
<dbReference type="GO" id="GO:0042059">
    <property type="term" value="P:negative regulation of epidermal growth factor receptor signaling pathway"/>
    <property type="evidence" value="ECO:0000314"/>
    <property type="project" value="BHF-UCL"/>
</dbReference>
<dbReference type="GO" id="GO:0043409">
    <property type="term" value="P:negative regulation of MAPK cascade"/>
    <property type="evidence" value="ECO:0000314"/>
    <property type="project" value="BHF-UCL"/>
</dbReference>
<dbReference type="GO" id="GO:0043524">
    <property type="term" value="P:negative regulation of neuron apoptotic process"/>
    <property type="evidence" value="ECO:0007669"/>
    <property type="project" value="Ensembl"/>
</dbReference>
<dbReference type="GO" id="GO:0050821">
    <property type="term" value="P:protein stabilization"/>
    <property type="evidence" value="ECO:0007669"/>
    <property type="project" value="Ensembl"/>
</dbReference>
<dbReference type="GO" id="GO:0016567">
    <property type="term" value="P:protein ubiquitination"/>
    <property type="evidence" value="ECO:0000314"/>
    <property type="project" value="BHF-UCL"/>
</dbReference>
<dbReference type="GO" id="GO:1990790">
    <property type="term" value="P:response to glial cell derived neurotrophic factor"/>
    <property type="evidence" value="ECO:0007669"/>
    <property type="project" value="Ensembl"/>
</dbReference>
<dbReference type="GO" id="GO:0007165">
    <property type="term" value="P:signal transduction"/>
    <property type="evidence" value="ECO:0000318"/>
    <property type="project" value="GO_Central"/>
</dbReference>
<dbReference type="GO" id="GO:0006511">
    <property type="term" value="P:ubiquitin-dependent protein catabolic process"/>
    <property type="evidence" value="ECO:0000314"/>
    <property type="project" value="BHF-UCL"/>
</dbReference>
<dbReference type="CDD" id="cd16710">
    <property type="entry name" value="RING-HC_Cbl-c"/>
    <property type="match status" value="1"/>
</dbReference>
<dbReference type="CDD" id="cd09920">
    <property type="entry name" value="SH2_Cbl-b_TKB"/>
    <property type="match status" value="1"/>
</dbReference>
<dbReference type="FunFam" id="3.30.40.10:FF:000367">
    <property type="entry name" value="Cbl proto-oncogene C"/>
    <property type="match status" value="1"/>
</dbReference>
<dbReference type="FunFam" id="3.30.505.10:FF:000007">
    <property type="entry name" value="E3 ubiquitin-protein ligase CBL"/>
    <property type="match status" value="1"/>
</dbReference>
<dbReference type="FunFam" id="1.10.238.10:FF:000182">
    <property type="entry name" value="E3 ubiquitin-protein ligase CBL-C"/>
    <property type="match status" value="1"/>
</dbReference>
<dbReference type="FunFam" id="1.20.930.20:FF:000004">
    <property type="entry name" value="E3 ubiquitin-protein ligase CBL-C"/>
    <property type="match status" value="1"/>
</dbReference>
<dbReference type="Gene3D" id="1.20.930.20">
    <property type="entry name" value="Adaptor protein Cbl, N-terminal domain"/>
    <property type="match status" value="1"/>
</dbReference>
<dbReference type="Gene3D" id="1.10.238.10">
    <property type="entry name" value="EF-hand"/>
    <property type="match status" value="1"/>
</dbReference>
<dbReference type="Gene3D" id="3.30.505.10">
    <property type="entry name" value="SH2 domain"/>
    <property type="match status" value="1"/>
</dbReference>
<dbReference type="Gene3D" id="3.30.40.10">
    <property type="entry name" value="Zinc/RING finger domain, C3HC4 (zinc finger)"/>
    <property type="match status" value="1"/>
</dbReference>
<dbReference type="IDEAL" id="IID00287"/>
<dbReference type="InterPro" id="IPR024162">
    <property type="entry name" value="Adaptor_Cbl"/>
</dbReference>
<dbReference type="InterPro" id="IPR014741">
    <property type="entry name" value="Adaptor_Cbl_EF_hand-like"/>
</dbReference>
<dbReference type="InterPro" id="IPR036537">
    <property type="entry name" value="Adaptor_Cbl_N_dom_sf"/>
</dbReference>
<dbReference type="InterPro" id="IPR003153">
    <property type="entry name" value="Adaptor_Cbl_N_hlx"/>
</dbReference>
<dbReference type="InterPro" id="IPR014742">
    <property type="entry name" value="Adaptor_Cbl_SH2-like"/>
</dbReference>
<dbReference type="InterPro" id="IPR024159">
    <property type="entry name" value="Cbl_PTB"/>
</dbReference>
<dbReference type="InterPro" id="IPR011992">
    <property type="entry name" value="EF-hand-dom_pair"/>
</dbReference>
<dbReference type="InterPro" id="IPR036860">
    <property type="entry name" value="SH2_dom_sf"/>
</dbReference>
<dbReference type="InterPro" id="IPR001841">
    <property type="entry name" value="Znf_RING"/>
</dbReference>
<dbReference type="InterPro" id="IPR013083">
    <property type="entry name" value="Znf_RING/FYVE/PHD"/>
</dbReference>
<dbReference type="InterPro" id="IPR017907">
    <property type="entry name" value="Znf_RING_CS"/>
</dbReference>
<dbReference type="PANTHER" id="PTHR23007">
    <property type="entry name" value="CBL"/>
    <property type="match status" value="1"/>
</dbReference>
<dbReference type="PANTHER" id="PTHR23007:SF12">
    <property type="entry name" value="E3 UBIQUITIN-PROTEIN LIGASE CBL-C"/>
    <property type="match status" value="1"/>
</dbReference>
<dbReference type="Pfam" id="PF02262">
    <property type="entry name" value="Cbl_N"/>
    <property type="match status" value="1"/>
</dbReference>
<dbReference type="Pfam" id="PF02761">
    <property type="entry name" value="Cbl_N2"/>
    <property type="match status" value="1"/>
</dbReference>
<dbReference type="Pfam" id="PF02762">
    <property type="entry name" value="Cbl_N3"/>
    <property type="match status" value="1"/>
</dbReference>
<dbReference type="Pfam" id="PF13920">
    <property type="entry name" value="zf-C3HC4_3"/>
    <property type="match status" value="1"/>
</dbReference>
<dbReference type="SMART" id="SM00184">
    <property type="entry name" value="RING"/>
    <property type="match status" value="1"/>
</dbReference>
<dbReference type="SUPFAM" id="SSF47473">
    <property type="entry name" value="EF-hand"/>
    <property type="match status" value="1"/>
</dbReference>
<dbReference type="SUPFAM" id="SSF47668">
    <property type="entry name" value="N-terminal domain of cbl (N-cbl)"/>
    <property type="match status" value="1"/>
</dbReference>
<dbReference type="SUPFAM" id="SSF57850">
    <property type="entry name" value="RING/U-box"/>
    <property type="match status" value="1"/>
</dbReference>
<dbReference type="SUPFAM" id="SSF55550">
    <property type="entry name" value="SH2 domain"/>
    <property type="match status" value="1"/>
</dbReference>
<dbReference type="PROSITE" id="PS51506">
    <property type="entry name" value="CBL_PTB"/>
    <property type="match status" value="1"/>
</dbReference>
<dbReference type="PROSITE" id="PS00518">
    <property type="entry name" value="ZF_RING_1"/>
    <property type="match status" value="1"/>
</dbReference>
<dbReference type="PROSITE" id="PS50089">
    <property type="entry name" value="ZF_RING_2"/>
    <property type="match status" value="1"/>
</dbReference>
<name>CBLC_HUMAN</name>
<protein>
    <recommendedName>
        <fullName>E3 ubiquitin-protein ligase CBL-C</fullName>
        <ecNumber evidence="8 10 12">2.3.2.27</ecNumber>
    </recommendedName>
    <alternativeName>
        <fullName>RING finger protein 57</fullName>
    </alternativeName>
    <alternativeName>
        <fullName evidence="15">RING-type E3 ubiquitin transferase CBL-C</fullName>
    </alternativeName>
    <alternativeName>
        <fullName>SH3-binding protein CBL-3</fullName>
    </alternativeName>
    <alternativeName>
        <fullName>SH3-binding protein CBL-C</fullName>
    </alternativeName>
    <alternativeName>
        <fullName>Signal transduction protein CBL-C</fullName>
    </alternativeName>
</protein>
<feature type="chain" id="PRO_0000055866" description="E3 ubiquitin-protein ligase CBL-C">
    <location>
        <begin position="1"/>
        <end position="474"/>
    </location>
</feature>
<feature type="domain" description="Cbl-PTB" evidence="4">
    <location>
        <begin position="7"/>
        <end position="321"/>
    </location>
</feature>
<feature type="zinc finger region" description="RING-type" evidence="3">
    <location>
        <begin position="351"/>
        <end position="390"/>
    </location>
</feature>
<feature type="region of interest" description="4H">
    <location>
        <begin position="7"/>
        <end position="145"/>
    </location>
</feature>
<feature type="region of interest" description="EF-hand-like">
    <location>
        <begin position="146"/>
        <end position="218"/>
    </location>
</feature>
<feature type="region of interest" description="SH2-like">
    <location>
        <begin position="219"/>
        <end position="321"/>
    </location>
</feature>
<feature type="region of interest" description="Linker">
    <location>
        <begin position="322"/>
        <end position="350"/>
    </location>
</feature>
<feature type="region of interest" description="Interaction with RET" evidence="9">
    <location>
        <begin position="351"/>
        <end position="474"/>
    </location>
</feature>
<feature type="region of interest" description="Disordered" evidence="5">
    <location>
        <begin position="409"/>
        <end position="474"/>
    </location>
</feature>
<feature type="compositionally biased region" description="Pro residues" evidence="5">
    <location>
        <begin position="432"/>
        <end position="441"/>
    </location>
</feature>
<feature type="binding site" evidence="2">
    <location>
        <position position="199"/>
    </location>
    <ligand>
        <name>Ca(2+)</name>
        <dbReference type="ChEBI" id="CHEBI:29108"/>
    </ligand>
</feature>
<feature type="binding site" evidence="2">
    <location>
        <position position="201"/>
    </location>
    <ligand>
        <name>Ca(2+)</name>
        <dbReference type="ChEBI" id="CHEBI:29108"/>
    </ligand>
</feature>
<feature type="binding site" evidence="2">
    <location>
        <position position="210"/>
    </location>
    <ligand>
        <name>Ca(2+)</name>
        <dbReference type="ChEBI" id="CHEBI:29108"/>
    </ligand>
</feature>
<feature type="binding site">
    <location>
        <position position="264"/>
    </location>
    <ligand>
        <name>4-O-phospho-L-tyrosine</name>
        <dbReference type="ChEBI" id="CHEBI:62338"/>
    </ligand>
</feature>
<feature type="modified residue" description="Phosphotyrosine; by SRC" evidence="10 12">
    <location>
        <position position="341"/>
    </location>
</feature>
<feature type="splice variant" id="VSP_005732" description="In isoform 2." evidence="14">
    <location>
        <begin position="261"/>
        <end position="306"/>
    </location>
</feature>
<feature type="sequence variant" id="VAR_018298" description="In dbSNP:rs3208856." evidence="6 7">
    <original>H</original>
    <variation>Y</variation>
    <location>
        <position position="405"/>
    </location>
</feature>
<feature type="mutagenesis site" description="Abolishes interaction with EGFR. Decreases interaction with SRC and abolishes SRC ubiquitination." evidence="11">
    <original>Y</original>
    <variation>A</variation>
    <location>
        <position position="244"/>
    </location>
</feature>
<feature type="mutagenesis site" description="No effect on interaction with EGFR and SRC as well as on SRC ubiquitination." evidence="11">
    <original>Y</original>
    <variation>F</variation>
    <location>
        <position position="244"/>
    </location>
</feature>
<feature type="mutagenesis site" description="Abolishes interaction with EGFR. Decreases interaction with SRC and abolishes SRC ubiquitination." evidence="11">
    <original>R</original>
    <variation>A</variation>
    <location>
        <position position="264"/>
    </location>
</feature>
<feature type="mutagenesis site" description="Enhances interaction with EGFR and SRC as well as SRC ubiquitination." evidence="11">
    <original>P</original>
    <variation>L</variation>
    <location>
        <position position="265"/>
    </location>
</feature>
<feature type="mutagenesis site" description="Decreases interactions with EGFR and SRC as well as SRC ubiquitination." evidence="11">
    <original>S</original>
    <variation>A</variation>
    <location>
        <position position="266"/>
    </location>
</feature>
<feature type="mutagenesis site" description="Abolishes interaction with EGFR. Decreases interaction with and ubiquitination of SRC." evidence="11">
    <original>T</original>
    <variation>A</variation>
    <location>
        <position position="268"/>
    </location>
</feature>
<feature type="mutagenesis site" description="No effect on interaction with RET. Binds slightly to SRC, this interaction is independent of SRC phosphorylation. Strongly decreases SRC ubiquitination. Abolishes interaction with EGFR." evidence="8 9 11">
    <original>G</original>
    <variation>E</variation>
    <location>
        <position position="276"/>
    </location>
</feature>
<feature type="mutagenesis site" description="Induces E3 activity and autoubiquitination. Releases ubiquitin-conjugating enzyme E2 UBE2D2 faster." evidence="8 10 12">
    <original>Y</original>
    <variation>E</variation>
    <location>
        <position position="341"/>
    </location>
</feature>
<feature type="mutagenesis site" description="Abolishes activation by EGF stimulation and enhancement by TGFB1I1 of E3 activity." evidence="8 10 12">
    <original>Y</original>
    <variation>F</variation>
    <location>
        <position position="341"/>
    </location>
</feature>
<feature type="mutagenesis site" description="Abolishes E3 activity." evidence="8 10 12">
    <location>
        <position position="341"/>
    </location>
</feature>
<feature type="mutagenesis site" description="No effect on TGFB1I1 and SRC interactions. Abolishes SRC ubiquitination. Abolishes interaction with TGFB1I1; when associated with A-366. Abolishes interaction with RET and inhibition of RET degradation." evidence="8 9 12">
    <original>C</original>
    <variation>A</variation>
    <location>
        <position position="351"/>
    </location>
</feature>
<feature type="mutagenesis site" description="Abolishes interaction with TGFB1I1. Abolishes interaction with TGFB1I1; when associated with A-351." evidence="12">
    <original>C</original>
    <variation>A</variation>
    <location>
        <position position="366"/>
    </location>
</feature>
<feature type="sequence conflict" description="In Ref. 1; BAA86298." evidence="15" ref="1">
    <original>N</original>
    <variation>T</variation>
    <location>
        <position position="234"/>
    </location>
</feature>
<feature type="sequence conflict" description="In Ref. 3; AAH28915." evidence="15" ref="3">
    <original>S</original>
    <variation>P</variation>
    <location>
        <position position="413"/>
    </location>
</feature>
<feature type="helix" evidence="17">
    <location>
        <begin position="13"/>
        <end position="31"/>
    </location>
</feature>
<feature type="strand" evidence="16">
    <location>
        <begin position="40"/>
        <end position="42"/>
    </location>
</feature>
<feature type="helix" evidence="17">
    <location>
        <begin position="44"/>
        <end position="62"/>
    </location>
</feature>
<feature type="strand" evidence="17">
    <location>
        <begin position="64"/>
        <end position="66"/>
    </location>
</feature>
<feature type="helix" evidence="17">
    <location>
        <begin position="76"/>
        <end position="97"/>
    </location>
</feature>
<feature type="strand" evidence="16">
    <location>
        <begin position="100"/>
        <end position="102"/>
    </location>
</feature>
<feature type="helix" evidence="16">
    <location>
        <begin position="108"/>
        <end position="111"/>
    </location>
</feature>
<feature type="helix" evidence="17">
    <location>
        <begin position="116"/>
        <end position="138"/>
    </location>
</feature>
<feature type="helix" evidence="17">
    <location>
        <begin position="140"/>
        <end position="142"/>
    </location>
</feature>
<feature type="turn" evidence="17">
    <location>
        <begin position="146"/>
        <end position="148"/>
    </location>
</feature>
<feature type="helix" evidence="17">
    <location>
        <begin position="154"/>
        <end position="164"/>
    </location>
</feature>
<feature type="strand" evidence="17">
    <location>
        <begin position="168"/>
        <end position="171"/>
    </location>
</feature>
<feature type="helix" evidence="17">
    <location>
        <begin position="172"/>
        <end position="179"/>
    </location>
</feature>
<feature type="turn" evidence="17">
    <location>
        <begin position="180"/>
        <end position="182"/>
    </location>
</feature>
<feature type="helix" evidence="17">
    <location>
        <begin position="189"/>
        <end position="198"/>
    </location>
</feature>
<feature type="strand" evidence="17">
    <location>
        <begin position="203"/>
        <end position="207"/>
    </location>
</feature>
<feature type="helix" evidence="17">
    <location>
        <begin position="208"/>
        <end position="217"/>
    </location>
</feature>
<feature type="helix" evidence="17">
    <location>
        <begin position="221"/>
        <end position="223"/>
    </location>
</feature>
<feature type="helix" evidence="17">
    <location>
        <begin position="224"/>
        <end position="232"/>
    </location>
</feature>
<feature type="strand" evidence="18">
    <location>
        <begin position="238"/>
        <end position="241"/>
    </location>
</feature>
<feature type="helix" evidence="17">
    <location>
        <begin position="244"/>
        <end position="251"/>
    </location>
</feature>
<feature type="helix" evidence="17">
    <location>
        <begin position="252"/>
        <end position="254"/>
    </location>
</feature>
<feature type="strand" evidence="17">
    <location>
        <begin position="260"/>
        <end position="265"/>
    </location>
</feature>
<feature type="strand" evidence="17">
    <location>
        <begin position="267"/>
        <end position="269"/>
    </location>
</feature>
<feature type="strand" evidence="17">
    <location>
        <begin position="273"/>
        <end position="278"/>
    </location>
</feature>
<feature type="strand" evidence="17">
    <location>
        <begin position="284"/>
        <end position="287"/>
    </location>
</feature>
<feature type="helix" evidence="17">
    <location>
        <begin position="294"/>
        <end position="303"/>
    </location>
</feature>
<feature type="helix" evidence="16">
    <location>
        <begin position="320"/>
        <end position="323"/>
    </location>
</feature>
<comment type="function">
    <text evidence="6 8 9 10 12">Acts as an E3 ubiquitin-protein ligase, which accepts ubiquitin from specific E2 ubiquitin-conjugating enzymes, and then transfers it to substrates promoting their degradation by the proteasome. Functionally coupled with the E2 ubiquitin-protein ligases UB2D1, UB2D2 and UB2D3. Regulator of EGFR mediated signal transduction; upon EGF activation, ubiquitinates EGFR. Isoform 1, but not isoform 2, inhibits EGF stimulated MAPK1 activation. Promotes ubiquitination of SRC phosphorylated at 'Tyr-419'. In collaboration with CD2AP may act as regulatory checkpoint for Ret signaling by modulating the rate of RET degradation after ligand activation; CD2AP converts it from an inhibitor to a promoter of RET degradation; the function limits the potency of GDNF on neuronal survival.</text>
</comment>
<comment type="catalytic activity">
    <reaction evidence="8 10 12">
        <text>S-ubiquitinyl-[E2 ubiquitin-conjugating enzyme]-L-cysteine + [acceptor protein]-L-lysine = [E2 ubiquitin-conjugating enzyme]-L-cysteine + N(6)-ubiquitinyl-[acceptor protein]-L-lysine.</text>
        <dbReference type="EC" id="2.3.2.27"/>
    </reaction>
</comment>
<comment type="activity regulation">
    <text evidence="10">Phosphorylation at Tyr-341 is necessary and sufficient for the activation of E3 activity.</text>
</comment>
<comment type="subunit">
    <text evidence="6 8 9 10 11 12 13">Interacts with ubiquitin-conjugating enzyme E2 UBE2D2 and UBE2D3. Isoform 1 interacts with EGFR (tyrosine phosphorylated). Interacts with the SH3 domain proteins LYN and CRK. Interacts (via RING-type zinc finger) with TGFB1I1 (via LIM zinc-binding domain 2); the interaction is direct and enhances the E3 activity. Interacts directly with RET (inactive) and CD2AP; dissociates from RET upon RET activation by GDNF which also increases the interaction with CD2AP suggesting dissociation as CBLC:CD2AP complex. Interacts with SRC; the interaction is enhanced when SRC is phosphorylated at 'Tyr-419'.</text>
</comment>
<comment type="interaction">
    <interactant intactId="EBI-2341018">
        <id>Q9ULV8</id>
    </interactant>
    <interactant intactId="EBI-930964">
        <id>P54253</id>
        <label>ATXN1</label>
    </interactant>
    <organismsDiffer>false</organismsDiffer>
    <experiments>6</experiments>
</comment>
<comment type="interaction">
    <interactant intactId="EBI-2341018">
        <id>Q9ULV8</id>
    </interactant>
    <interactant intactId="EBI-372899">
        <id>Q13148</id>
        <label>TARDBP</label>
    </interactant>
    <organismsDiffer>false</organismsDiffer>
    <experiments>3</experiments>
</comment>
<comment type="interaction">
    <interactant intactId="EBI-2341018">
        <id>Q9ULV8</id>
    </interactant>
    <interactant intactId="EBI-473850">
        <id>P61086</id>
        <label>UBE2K</label>
    </interactant>
    <organismsDiffer>false</organismsDiffer>
    <experiments>3</experiments>
</comment>
<comment type="interaction">
    <interactant intactId="EBI-2341018">
        <id>Q9ULV8</id>
    </interactant>
    <interactant intactId="EBI-515331">
        <id>P07947</id>
        <label>YES1</label>
    </interactant>
    <organismsDiffer>false</organismsDiffer>
    <experiments>3</experiments>
</comment>
<comment type="alternative products">
    <event type="alternative splicing"/>
    <isoform>
        <id>Q9ULV8-1</id>
        <name>1</name>
        <name>Long</name>
        <sequence type="displayed"/>
    </isoform>
    <isoform>
        <id>Q9ULV8-2</id>
        <name>2</name>
        <name>Short</name>
        <sequence type="described" ref="VSP_005732"/>
    </isoform>
</comment>
<comment type="tissue specificity">
    <text evidence="6">Ubiquitous.</text>
</comment>
<comment type="domain">
    <text evidence="10">EF-hand-like and Sh2-like domains are required for N-terminal inhibition of E3 activity.</text>
</comment>
<comment type="domain">
    <text evidence="4 10">The N-terminus is composed of the phosphotyrosine binding (PTB) domain, a short linker region and the RING-type zinc finger. The PTB domain, which is also called TKB (tyrosine kinase binding) domain, is composed of three different subdomains: a four-helix bundle (4H), a calcium-binding EF hand and a divergent SH2 domain.</text>
</comment>
<comment type="domain">
    <text evidence="1">The RING-type zinc finger domain mediates binding to an E2 ubiquitin-conjugating enzyme.</text>
</comment>
<comment type="PTM">
    <text>Phosphorylated on multiple tyrosine residues by SRC. Isoform 1, but not isoform 2, is phosphorylated on tyrosines by EGFR.</text>
</comment>
<comment type="PTM">
    <text evidence="8 10 12">Autoubiquitinated when phosphorylated at Tyr-341, enhanced by SRC; suggesting proteasomal degradation.</text>
</comment>
<comment type="miscellaneous">
    <text>This protein has one functional calcium-binding site.</text>
</comment>
<comment type="online information" name="Atlas of Genetics and Cytogenetics in Oncology and Haematology">
    <link uri="https://atlasgeneticsoncology.org/gene/194/CBLc"/>
</comment>
<proteinExistence type="evidence at protein level"/>
<keyword id="KW-0002">3D-structure</keyword>
<keyword id="KW-0025">Alternative splicing</keyword>
<keyword id="KW-0106">Calcium</keyword>
<keyword id="KW-0479">Metal-binding</keyword>
<keyword id="KW-0597">Phosphoprotein</keyword>
<keyword id="KW-1267">Proteomics identification</keyword>
<keyword id="KW-1185">Reference proteome</keyword>
<keyword id="KW-0677">Repeat</keyword>
<keyword id="KW-0729">SH3-binding</keyword>
<keyword id="KW-0808">Transferase</keyword>
<keyword id="KW-0832">Ubl conjugation</keyword>
<keyword id="KW-0833">Ubl conjugation pathway</keyword>
<keyword id="KW-0862">Zinc</keyword>
<keyword id="KW-0863">Zinc-finger</keyword>